<gene>
    <name type="ordered locus">BCB4264_A4022</name>
</gene>
<dbReference type="EC" id="2.3.1.-" evidence="1"/>
<dbReference type="EMBL" id="CP001176">
    <property type="protein sequence ID" value="ACK63461.1"/>
    <property type="molecule type" value="Genomic_DNA"/>
</dbReference>
<dbReference type="RefSeq" id="WP_000506696.1">
    <property type="nucleotide sequence ID" value="NC_011725.1"/>
</dbReference>
<dbReference type="SMR" id="B7H6Q7"/>
<dbReference type="KEGG" id="bcb:BCB4264_A4022"/>
<dbReference type="HOGENOM" id="CLU_136634_0_0_9"/>
<dbReference type="Proteomes" id="UP000007096">
    <property type="component" value="Chromosome"/>
</dbReference>
<dbReference type="GO" id="GO:0016747">
    <property type="term" value="F:acyltransferase activity, transferring groups other than amino-acyl groups"/>
    <property type="evidence" value="ECO:0007669"/>
    <property type="project" value="UniProtKB-UniRule"/>
</dbReference>
<dbReference type="CDD" id="cd04301">
    <property type="entry name" value="NAT_SF"/>
    <property type="match status" value="1"/>
</dbReference>
<dbReference type="Gene3D" id="3.40.630.30">
    <property type="match status" value="1"/>
</dbReference>
<dbReference type="HAMAP" id="MF_00824">
    <property type="entry name" value="Acetyltransf_YlbP"/>
    <property type="match status" value="1"/>
</dbReference>
<dbReference type="InterPro" id="IPR016181">
    <property type="entry name" value="Acyl_CoA_acyltransferase"/>
</dbReference>
<dbReference type="InterPro" id="IPR000182">
    <property type="entry name" value="GNAT_dom"/>
</dbReference>
<dbReference type="InterPro" id="IPR017274">
    <property type="entry name" value="YlbP"/>
</dbReference>
<dbReference type="NCBIfam" id="NF010241">
    <property type="entry name" value="PRK13688.1"/>
    <property type="match status" value="1"/>
</dbReference>
<dbReference type="Pfam" id="PF00583">
    <property type="entry name" value="Acetyltransf_1"/>
    <property type="match status" value="1"/>
</dbReference>
<dbReference type="PIRSF" id="PIRSF037732">
    <property type="entry name" value="YlbP_prd"/>
    <property type="match status" value="1"/>
</dbReference>
<dbReference type="SUPFAM" id="SSF55729">
    <property type="entry name" value="Acyl-CoA N-acyltransferases (Nat)"/>
    <property type="match status" value="1"/>
</dbReference>
<dbReference type="PROSITE" id="PS51186">
    <property type="entry name" value="GNAT"/>
    <property type="match status" value="1"/>
</dbReference>
<feature type="chain" id="PRO_1000191222" description="Uncharacterized N-acetyltransferase BCB4264_A4022">
    <location>
        <begin position="1"/>
        <end position="157"/>
    </location>
</feature>
<feature type="domain" description="N-acetyltransferase" evidence="1">
    <location>
        <begin position="9"/>
        <end position="154"/>
    </location>
</feature>
<evidence type="ECO:0000255" key="1">
    <source>
        <dbReference type="HAMAP-Rule" id="MF_00824"/>
    </source>
</evidence>
<proteinExistence type="inferred from homology"/>
<name>Y4022_BACC4</name>
<sequence length="157" mass="17975">MGFPKVERLLINYKTLDEFKKFKGCGAQELSMLEELQANIIENDSESPFYGIYYGGSLIARMSLYMKRNGGEPFEITGPYLELYKLEVLPTFQKQGFGQMLVNHAKQMQFPIKTIARIHSAGFWDKLNFTPVSVTDGDFYIWHPETNLNAVTNEESA</sequence>
<protein>
    <recommendedName>
        <fullName evidence="1">Uncharacterized N-acetyltransferase BCB4264_A4022</fullName>
        <ecNumber evidence="1">2.3.1.-</ecNumber>
    </recommendedName>
</protein>
<organism>
    <name type="scientific">Bacillus cereus (strain B4264)</name>
    <dbReference type="NCBI Taxonomy" id="405532"/>
    <lineage>
        <taxon>Bacteria</taxon>
        <taxon>Bacillati</taxon>
        <taxon>Bacillota</taxon>
        <taxon>Bacilli</taxon>
        <taxon>Bacillales</taxon>
        <taxon>Bacillaceae</taxon>
        <taxon>Bacillus</taxon>
        <taxon>Bacillus cereus group</taxon>
    </lineage>
</organism>
<reference key="1">
    <citation type="submission" date="2008-10" db="EMBL/GenBank/DDBJ databases">
        <title>Genome sequence of Bacillus cereus B4264.</title>
        <authorList>
            <person name="Dodson R.J."/>
            <person name="Durkin A.S."/>
            <person name="Rosovitz M.J."/>
            <person name="Rasko D.A."/>
            <person name="Hoffmaster A."/>
            <person name="Ravel J."/>
            <person name="Sutton G."/>
        </authorList>
    </citation>
    <scope>NUCLEOTIDE SEQUENCE [LARGE SCALE GENOMIC DNA]</scope>
    <source>
        <strain>B4264</strain>
    </source>
</reference>
<keyword id="KW-0012">Acyltransferase</keyword>
<keyword id="KW-0808">Transferase</keyword>
<accession>B7H6Q7</accession>